<proteinExistence type="inferred from homology"/>
<name>UL132_HCMVA</name>
<protein>
    <recommendedName>
        <fullName>Envelope glycoprotein UL132</fullName>
        <shortName>L3</shortName>
    </recommendedName>
</protein>
<organismHost>
    <name type="scientific">Homo sapiens</name>
    <name type="common">Human</name>
    <dbReference type="NCBI Taxonomy" id="9606"/>
</organismHost>
<gene>
    <name type="primary">UL132</name>
</gene>
<reference key="1">
    <citation type="journal article" date="1990" name="Curr. Top. Microbiol. Immunol.">
        <title>Analysis of the protein-coding content of the sequence of human cytomegalovirus strain AD169.</title>
        <authorList>
            <person name="Chee M.S."/>
            <person name="Bankier A.T."/>
            <person name="Beck S."/>
            <person name="Bohni R."/>
            <person name="Brown C.M."/>
            <person name="Cerny R."/>
            <person name="Horsnell T."/>
            <person name="Hutchison C.A. III"/>
            <person name="Kouzarides T."/>
            <person name="Martignetti J.A."/>
            <person name="Preddie E."/>
            <person name="Satchwell S.C."/>
            <person name="Tomlinson P."/>
            <person name="Weston K.M."/>
            <person name="Barrell B.G."/>
        </authorList>
    </citation>
    <scope>NUCLEOTIDE SEQUENCE [LARGE SCALE GENOMIC DNA]</scope>
</reference>
<reference key="2">
    <citation type="journal article" date="2003" name="J. Gen. Virol.">
        <title>The human cytomegalovirus genome revisited: comparison with the chimpanzee cytomegalovirus genome.</title>
        <authorList>
            <person name="Davison A.J."/>
            <person name="Dolan A."/>
            <person name="Akter P."/>
            <person name="Addison C."/>
            <person name="Dargan D.J."/>
            <person name="Alcendor D.J."/>
            <person name="McGeoch D.J."/>
            <person name="Hayward G.S."/>
        </authorList>
    </citation>
    <scope>GENOME REANNOTATION</scope>
</reference>
<reference key="3">
    <citation type="journal article" date="2003" name="J. Gen. Virol.">
        <authorList>
            <person name="Davison A.J."/>
            <person name="Dolan A."/>
            <person name="Akter P."/>
            <person name="Addison C."/>
            <person name="Dargan D.J."/>
            <person name="Alcendor D.J."/>
            <person name="McGeoch D.J."/>
            <person name="Hayward G.S."/>
        </authorList>
    </citation>
    <scope>ERRATUM OF PUBMED:12533697</scope>
</reference>
<reference key="4">
    <citation type="journal article" date="2004" name="J. Virol.">
        <title>Identification of proteins in human cytomegalovirus (HCMV) particles: the HCMV proteome.</title>
        <authorList>
            <person name="Varnum S.M."/>
            <person name="Streblow D.N."/>
            <person name="Monroe M.E."/>
            <person name="Smith P."/>
            <person name="Auberry K.J."/>
            <person name="Pasa-Tolic L."/>
            <person name="Wang D."/>
            <person name="Camp D.G. II"/>
            <person name="Rodland K."/>
            <person name="Wiley S."/>
            <person name="Britt W."/>
            <person name="Shenk T."/>
            <person name="Smith R.D."/>
            <person name="Nelson J.A."/>
        </authorList>
    </citation>
    <scope>IDENTIFICATION</scope>
</reference>
<reference key="5">
    <citation type="journal article" date="2004" name="J. Virol.">
        <authorList>
            <person name="Varnum S.M."/>
            <person name="Streblow D.N."/>
            <person name="Monroe M.E."/>
            <person name="Smith P."/>
            <person name="Auberry K.J."/>
            <person name="Pasa-Tolic L."/>
            <person name="Wang D."/>
            <person name="Camp D.G. II"/>
            <person name="Rodland K."/>
            <person name="Wiley S."/>
            <person name="Britt W."/>
            <person name="Shenk T."/>
            <person name="Smith R.D."/>
            <person name="Nelson J.A."/>
        </authorList>
    </citation>
    <scope>ERRATUM OF PUBMED:15452216</scope>
</reference>
<reference key="6">
    <citation type="submission" date="2008-12" db="EMBL/GenBank/DDBJ databases">
        <title>A variant of human cytomegalovirus strain AD169 that contains most of the UL/b' region.</title>
        <authorList>
            <person name="Bradley A.J."/>
            <person name="Lurain N.S."/>
            <person name="Ghazal P."/>
            <person name="Cunningham C."/>
            <person name="Wilkinson G.W.G."/>
            <person name="Dargan D.J."/>
            <person name="Davison A.J."/>
        </authorList>
    </citation>
    <scope>NUCLEOTIDE SEQUENCE [GENOMIC DNA]</scope>
</reference>
<feature type="signal peptide" evidence="1">
    <location>
        <begin position="1"/>
        <end position="29"/>
    </location>
</feature>
<feature type="chain" id="PRO_0000037459" description="Envelope glycoprotein UL132">
    <location>
        <begin position="30"/>
        <end position="270"/>
    </location>
</feature>
<feature type="transmembrane region" description="Helical" evidence="1">
    <location>
        <begin position="84"/>
        <end position="104"/>
    </location>
</feature>
<feature type="region of interest" description="Disordered" evidence="2">
    <location>
        <begin position="33"/>
        <end position="70"/>
    </location>
</feature>
<feature type="region of interest" description="Disordered" evidence="2">
    <location>
        <begin position="129"/>
        <end position="179"/>
    </location>
</feature>
<feature type="compositionally biased region" description="Low complexity" evidence="2">
    <location>
        <begin position="33"/>
        <end position="67"/>
    </location>
</feature>
<feature type="compositionally biased region" description="Low complexity" evidence="2">
    <location>
        <begin position="133"/>
        <end position="147"/>
    </location>
</feature>
<feature type="glycosylation site" description="N-linked (GlcNAc...) asparagine; by host" evidence="1">
    <location>
        <position position="31"/>
    </location>
</feature>
<feature type="glycosylation site" description="N-linked (GlcNAc...) asparagine; by host" evidence="1">
    <location>
        <position position="61"/>
    </location>
</feature>
<feature type="glycosylation site" description="N-linked (GlcNAc...) asparagine; by host" evidence="1">
    <location>
        <position position="245"/>
    </location>
</feature>
<organism>
    <name type="scientific">Human cytomegalovirus (strain AD169)</name>
    <name type="common">HHV-5</name>
    <name type="synonym">Human herpesvirus 5</name>
    <dbReference type="NCBI Taxonomy" id="10360"/>
    <lineage>
        <taxon>Viruses</taxon>
        <taxon>Duplodnaviria</taxon>
        <taxon>Heunggongvirae</taxon>
        <taxon>Peploviricota</taxon>
        <taxon>Herviviricetes</taxon>
        <taxon>Herpesvirales</taxon>
        <taxon>Orthoherpesviridae</taxon>
        <taxon>Betaherpesvirinae</taxon>
        <taxon>Cytomegalovirus</taxon>
        <taxon>Cytomegalovirus humanbeta5</taxon>
        <taxon>Human cytomegalovirus</taxon>
    </lineage>
</organism>
<comment type="subcellular location">
    <subcellularLocation>
        <location evidence="3">Virion membrane</location>
        <topology evidence="3">Single-pass membrane protein</topology>
    </subcellularLocation>
</comment>
<comment type="similarity">
    <text evidence="3">Belongs to the HHV-5 UL132 family.</text>
</comment>
<evidence type="ECO:0000255" key="1"/>
<evidence type="ECO:0000256" key="2">
    <source>
        <dbReference type="SAM" id="MobiDB-lite"/>
    </source>
</evidence>
<evidence type="ECO:0000305" key="3"/>
<keyword id="KW-0325">Glycoprotein</keyword>
<keyword id="KW-0472">Membrane</keyword>
<keyword id="KW-1185">Reference proteome</keyword>
<keyword id="KW-0732">Signal</keyword>
<keyword id="KW-0812">Transmembrane</keyword>
<keyword id="KW-1133">Transmembrane helix</keyword>
<keyword id="KW-0261">Viral envelope protein</keyword>
<keyword id="KW-0946">Virion</keyword>
<accession>P69338</accession>
<accession>B8YEE4</accession>
<accession>P16774</accession>
<accession>Q7M6R9</accession>
<dbReference type="EMBL" id="X17403">
    <property type="protein sequence ID" value="CAA35295.1"/>
    <property type="molecule type" value="Genomic_DNA"/>
</dbReference>
<dbReference type="EMBL" id="BK000394">
    <property type="protein sequence ID" value="DAA00117.1"/>
    <property type="molecule type" value="Genomic_DNA"/>
</dbReference>
<dbReference type="EMBL" id="FJ527563">
    <property type="protein sequence ID" value="ACL51188.1"/>
    <property type="molecule type" value="Genomic_DNA"/>
</dbReference>
<dbReference type="PIR" id="S09898">
    <property type="entry name" value="S09898"/>
</dbReference>
<dbReference type="SMR" id="P69338"/>
<dbReference type="GlyCosmos" id="P69338">
    <property type="glycosylation" value="3 sites, No reported glycans"/>
</dbReference>
<dbReference type="Proteomes" id="UP000008991">
    <property type="component" value="Segment"/>
</dbReference>
<dbReference type="Proteomes" id="UP000008992">
    <property type="component" value="Segment"/>
</dbReference>
<dbReference type="Proteomes" id="UP000180728">
    <property type="component" value="Segment"/>
</dbReference>
<dbReference type="GO" id="GO:0016020">
    <property type="term" value="C:membrane"/>
    <property type="evidence" value="ECO:0007669"/>
    <property type="project" value="UniProtKB-KW"/>
</dbReference>
<dbReference type="GO" id="GO:0019031">
    <property type="term" value="C:viral envelope"/>
    <property type="evidence" value="ECO:0007669"/>
    <property type="project" value="UniProtKB-KW"/>
</dbReference>
<dbReference type="GO" id="GO:0055036">
    <property type="term" value="C:virion membrane"/>
    <property type="evidence" value="ECO:0007669"/>
    <property type="project" value="UniProtKB-SubCell"/>
</dbReference>
<dbReference type="InterPro" id="IPR021023">
    <property type="entry name" value="UL132"/>
</dbReference>
<dbReference type="Pfam" id="PF11359">
    <property type="entry name" value="gpUL132"/>
    <property type="match status" value="1"/>
</dbReference>
<sequence length="270" mass="29972">MPAPRGLLRATFLVLVAFGLLLHIDFSDATNMTSSTNVPTSTSSRNTVESTTSSEPTTETNMTTARESSVHDARNDEIMKVLAILFYIVTGTSIFSFIAVLIAVVYSSCCKHPGRFRFADEEAVNLLDDTDDSGGSSPFGSGSRRGSQIPAGFCSSSPYQRLETRDWDEEEEASAARERMKHDPENVIYFRKDGNLDTSFVNPNYGRGSPLTIESHLSDNEEDPIRYYVSVYDELTASEMEEPSNSTSWQIPKLMKVAMQPVSLRDPEYD</sequence>